<accession>Q9PJY4</accession>
<sequence>MFPQKITLWLYPLGLFANLFFGTAFCVQWFLIKKRGCSFVPKIFWHLSCSGAVLMICHGFIQSQYPIALLHSFNLIIYFRNLNIASSTPLPISKIVSLLVVSATAITLSFAIGTQYLPHMTWMASPNILHLNLPEANFLWQLIGCIGLTIFSLRFFIQWFYLEYKNQSSLPTPFWKASLVGGSICLIYFLRTGDIVNVLCYGCGLFPSLANLRIASREAIQKPFSCSCFISAGEHSGDTLGGNLLKEIHAKYPDIHCFGVGGPQMRAQNFCTLFSMEKFQISGFWEVLLALPKLWYRRRILYKTILKRNPQAVICIDFPDFHFLLIKKLRSLGYKGKIVHYVCPSIWAWRPSRKTTLEKYLDLLLLILPFEQKLFKDSPLRTVYIGHPLSETIKLFCPKQNWKERLHLPTDKPFVAAFPGSRHSDILRNLTIQVQAFQASDFASTHHLLVSSANPAYDHLILEILQQNRCLHSNIVPSQFRYELMRECDCALAKCGTIVLETALNLTPTIVTCQLRPLDTFLAKYIFNIILPAYSLPNIILGRTIFPEFIGGKKDFRYEDVAAALNILKTSQAQEKQKNACKDVYQAINESASTIKECLPFIFEASY</sequence>
<name>LPXB_CHLMU</name>
<dbReference type="EC" id="2.4.1.182"/>
<dbReference type="EMBL" id="AE002160">
    <property type="protein sequence ID" value="AAF39508.1"/>
    <property type="molecule type" value="Genomic_DNA"/>
</dbReference>
<dbReference type="PIR" id="E81676">
    <property type="entry name" value="E81676"/>
</dbReference>
<dbReference type="RefSeq" id="WP_010231237.1">
    <property type="nucleotide sequence ID" value="NZ_CP063055.1"/>
</dbReference>
<dbReference type="SMR" id="Q9PJY4"/>
<dbReference type="CAZy" id="GT19">
    <property type="family name" value="Glycosyltransferase Family 19"/>
</dbReference>
<dbReference type="GeneID" id="1246053"/>
<dbReference type="KEGG" id="cmu:TC_0692"/>
<dbReference type="eggNOG" id="COG0763">
    <property type="taxonomic scope" value="Bacteria"/>
</dbReference>
<dbReference type="eggNOG" id="COG3952">
    <property type="taxonomic scope" value="Bacteria"/>
</dbReference>
<dbReference type="HOGENOM" id="CLU_430672_0_0_0"/>
<dbReference type="OrthoDB" id="9801642at2"/>
<dbReference type="UniPathway" id="UPA00973"/>
<dbReference type="Proteomes" id="UP000000800">
    <property type="component" value="Chromosome"/>
</dbReference>
<dbReference type="GO" id="GO:0016020">
    <property type="term" value="C:membrane"/>
    <property type="evidence" value="ECO:0007669"/>
    <property type="project" value="GOC"/>
</dbReference>
<dbReference type="GO" id="GO:0008915">
    <property type="term" value="F:lipid-A-disaccharide synthase activity"/>
    <property type="evidence" value="ECO:0007669"/>
    <property type="project" value="UniProtKB-UniRule"/>
</dbReference>
<dbReference type="GO" id="GO:0005543">
    <property type="term" value="F:phospholipid binding"/>
    <property type="evidence" value="ECO:0007669"/>
    <property type="project" value="TreeGrafter"/>
</dbReference>
<dbReference type="GO" id="GO:0009245">
    <property type="term" value="P:lipid A biosynthetic process"/>
    <property type="evidence" value="ECO:0007669"/>
    <property type="project" value="UniProtKB-UniRule"/>
</dbReference>
<dbReference type="Gene3D" id="3.40.50.2000">
    <property type="entry name" value="Glycogen Phosphorylase B"/>
    <property type="match status" value="1"/>
</dbReference>
<dbReference type="HAMAP" id="MF_00392">
    <property type="entry name" value="LpxB"/>
    <property type="match status" value="1"/>
</dbReference>
<dbReference type="InterPro" id="IPR003835">
    <property type="entry name" value="Glyco_trans_19"/>
</dbReference>
<dbReference type="InterPro" id="IPR011499">
    <property type="entry name" value="Lipid_A_biosynth_N"/>
</dbReference>
<dbReference type="NCBIfam" id="TIGR00215">
    <property type="entry name" value="lpxB"/>
    <property type="match status" value="1"/>
</dbReference>
<dbReference type="NCBIfam" id="NF002173">
    <property type="entry name" value="PRK01021.1"/>
    <property type="match status" value="1"/>
</dbReference>
<dbReference type="PANTHER" id="PTHR30372">
    <property type="entry name" value="LIPID-A-DISACCHARIDE SYNTHASE"/>
    <property type="match status" value="1"/>
</dbReference>
<dbReference type="PANTHER" id="PTHR30372:SF4">
    <property type="entry name" value="LIPID-A-DISACCHARIDE SYNTHASE, MITOCHONDRIAL-RELATED"/>
    <property type="match status" value="1"/>
</dbReference>
<dbReference type="Pfam" id="PF07578">
    <property type="entry name" value="LAB_N"/>
    <property type="match status" value="2"/>
</dbReference>
<dbReference type="Pfam" id="PF02684">
    <property type="entry name" value="LpxB"/>
    <property type="match status" value="1"/>
</dbReference>
<dbReference type="SMART" id="SM01259">
    <property type="entry name" value="LAB_N"/>
    <property type="match status" value="2"/>
</dbReference>
<dbReference type="SUPFAM" id="SSF53756">
    <property type="entry name" value="UDP-Glycosyltransferase/glycogen phosphorylase"/>
    <property type="match status" value="1"/>
</dbReference>
<organism>
    <name type="scientific">Chlamydia muridarum (strain MoPn / Nigg)</name>
    <dbReference type="NCBI Taxonomy" id="243161"/>
    <lineage>
        <taxon>Bacteria</taxon>
        <taxon>Pseudomonadati</taxon>
        <taxon>Chlamydiota</taxon>
        <taxon>Chlamydiia</taxon>
        <taxon>Chlamydiales</taxon>
        <taxon>Chlamydiaceae</taxon>
        <taxon>Chlamydia/Chlamydophila group</taxon>
        <taxon>Chlamydia</taxon>
    </lineage>
</organism>
<reference key="1">
    <citation type="journal article" date="2000" name="Nucleic Acids Res.">
        <title>Genome sequences of Chlamydia trachomatis MoPn and Chlamydia pneumoniae AR39.</title>
        <authorList>
            <person name="Read T.D."/>
            <person name="Brunham R.C."/>
            <person name="Shen C."/>
            <person name="Gill S.R."/>
            <person name="Heidelberg J.F."/>
            <person name="White O."/>
            <person name="Hickey E.K."/>
            <person name="Peterson J.D."/>
            <person name="Utterback T.R."/>
            <person name="Berry K.J."/>
            <person name="Bass S."/>
            <person name="Linher K.D."/>
            <person name="Weidman J.F."/>
            <person name="Khouri H.M."/>
            <person name="Craven B."/>
            <person name="Bowman C."/>
            <person name="Dodson R.J."/>
            <person name="Gwinn M.L."/>
            <person name="Nelson W.C."/>
            <person name="DeBoy R.T."/>
            <person name="Kolonay J.F."/>
            <person name="McClarty G."/>
            <person name="Salzberg S.L."/>
            <person name="Eisen J.A."/>
            <person name="Fraser C.M."/>
        </authorList>
    </citation>
    <scope>NUCLEOTIDE SEQUENCE [LARGE SCALE GENOMIC DNA]</scope>
    <source>
        <strain>MoPn / Nigg</strain>
    </source>
</reference>
<comment type="function">
    <text evidence="1">Condensation of UDP-2,3-diacylglucosamine and 2,3-diacylglucosamine-1-phosphate to form lipid A disaccharide, a precursor of lipid A, a phosphorylated glycolipid that anchors the lipopolysaccharide to the outer membrane of the cell.</text>
</comment>
<comment type="catalytic activity">
    <reaction>
        <text>a lipid X + a UDP-2-N,3-O-bis[(3R)-3-hydroxyacyl]-alpha-D-glucosamine = a lipid A disaccharide + UDP + H(+)</text>
        <dbReference type="Rhea" id="RHEA:67828"/>
        <dbReference type="ChEBI" id="CHEBI:15378"/>
        <dbReference type="ChEBI" id="CHEBI:58223"/>
        <dbReference type="ChEBI" id="CHEBI:137748"/>
        <dbReference type="ChEBI" id="CHEBI:176338"/>
        <dbReference type="ChEBI" id="CHEBI:176343"/>
        <dbReference type="EC" id="2.4.1.182"/>
    </reaction>
</comment>
<comment type="pathway">
    <text>Bacterial outer membrane biogenesis; LPS lipid A biosynthesis.</text>
</comment>
<comment type="similarity">
    <text evidence="2">In the C-terminal section; belongs to the LpxB family.</text>
</comment>
<protein>
    <recommendedName>
        <fullName>Lipid-A-disaccharide synthase</fullName>
        <ecNumber>2.4.1.182</ecNumber>
    </recommendedName>
</protein>
<proteinExistence type="inferred from homology"/>
<keyword id="KW-0328">Glycosyltransferase</keyword>
<keyword id="KW-0441">Lipid A biosynthesis</keyword>
<keyword id="KW-0444">Lipid biosynthesis</keyword>
<keyword id="KW-0443">Lipid metabolism</keyword>
<keyword id="KW-0808">Transferase</keyword>
<feature type="chain" id="PRO_0000190159" description="Lipid-A-disaccharide synthase">
    <location>
        <begin position="1"/>
        <end position="607"/>
    </location>
</feature>
<feature type="region of interest" description="Unknown">
    <location>
        <begin position="1"/>
        <end position="224"/>
    </location>
</feature>
<feature type="region of interest" description="Lipid-A-disaccharide synthase">
    <location>
        <begin position="225"/>
        <end position="607"/>
    </location>
</feature>
<gene>
    <name type="primary">lpxB</name>
    <name type="ordered locus">TC_0692</name>
</gene>
<evidence type="ECO:0000250" key="1"/>
<evidence type="ECO:0000305" key="2"/>